<feature type="chain" id="PRO_1000206429" description="Glycogen synthase">
    <location>
        <begin position="1"/>
        <end position="478"/>
    </location>
</feature>
<feature type="binding site" evidence="1">
    <location>
        <position position="16"/>
    </location>
    <ligand>
        <name>ADP-alpha-D-glucose</name>
        <dbReference type="ChEBI" id="CHEBI:57498"/>
    </ligand>
</feature>
<sequence>MKNVLLIASEAVPFIKTGGLADVAGSLPKYFDKTKFDVRVMIPKYTCIPWEYREKMVYKTHFYIDLAWRTQYVGVFELEWNGVTFYFIDNEFYFGGNKPYSWIHEDIEKFAFFSKAALSALPVLGFRPDIIHCNDWQTGLIPVYLKERFSQGEFYQGIKSIMTIHNLKFQGIWDLKKVKDITGLPDEYFTSDKLEAYDDANYLKGGIVYADRVTTVSETYAEEIKTPFYGENLDGLMRARSNVLSGIVNGIDYDEYNPETDKRIPNNYNQVTFRKEKWKNKVALQKELGLTEDKGKFMIGLVSRLTDQKGLDLVAYVMDQLCAEDVQFVVLGTGEERYENMFRHYDWKYNDRVSANIYYSEDMSHKIYAACDAFLMPSLFEPCGLSQLMSLRYGTVPIVRETGGLKDTVEPYNEYEGKGTGFSFANYNAHEMLGIVNYAKDVYYNHKREWNKIVDRGMKTDFSWNSSARKYEELYNSL</sequence>
<accession>C4Z0G2</accession>
<evidence type="ECO:0000255" key="1">
    <source>
        <dbReference type="HAMAP-Rule" id="MF_00484"/>
    </source>
</evidence>
<proteinExistence type="inferred from homology"/>
<keyword id="KW-0320">Glycogen biosynthesis</keyword>
<keyword id="KW-0328">Glycosyltransferase</keyword>
<keyword id="KW-1185">Reference proteome</keyword>
<keyword id="KW-0808">Transferase</keyword>
<comment type="function">
    <text evidence="1">Synthesizes alpha-1,4-glucan chains using ADP-glucose.</text>
</comment>
<comment type="catalytic activity">
    <reaction evidence="1">
        <text>[(1-&gt;4)-alpha-D-glucosyl](n) + ADP-alpha-D-glucose = [(1-&gt;4)-alpha-D-glucosyl](n+1) + ADP + H(+)</text>
        <dbReference type="Rhea" id="RHEA:18189"/>
        <dbReference type="Rhea" id="RHEA-COMP:9584"/>
        <dbReference type="Rhea" id="RHEA-COMP:9587"/>
        <dbReference type="ChEBI" id="CHEBI:15378"/>
        <dbReference type="ChEBI" id="CHEBI:15444"/>
        <dbReference type="ChEBI" id="CHEBI:57498"/>
        <dbReference type="ChEBI" id="CHEBI:456216"/>
        <dbReference type="EC" id="2.4.1.21"/>
    </reaction>
</comment>
<comment type="pathway">
    <text evidence="1">Glycan biosynthesis; glycogen biosynthesis.</text>
</comment>
<comment type="similarity">
    <text evidence="1">Belongs to the glycosyltransferase 1 family. Bacterial/plant glycogen synthase subfamily.</text>
</comment>
<organism>
    <name type="scientific">Lachnospira eligens (strain ATCC 27750 / DSM 3376 / VPI C15-48 / C15-B4)</name>
    <name type="common">Eubacterium eligens</name>
    <dbReference type="NCBI Taxonomy" id="515620"/>
    <lineage>
        <taxon>Bacteria</taxon>
        <taxon>Bacillati</taxon>
        <taxon>Bacillota</taxon>
        <taxon>Clostridia</taxon>
        <taxon>Lachnospirales</taxon>
        <taxon>Lachnospiraceae</taxon>
        <taxon>Lachnospira</taxon>
    </lineage>
</organism>
<protein>
    <recommendedName>
        <fullName evidence="1">Glycogen synthase</fullName>
        <ecNumber evidence="1">2.4.1.21</ecNumber>
    </recommendedName>
    <alternativeName>
        <fullName evidence="1">Starch [bacterial glycogen] synthase</fullName>
    </alternativeName>
</protein>
<reference key="1">
    <citation type="journal article" date="2009" name="Proc. Natl. Acad. Sci. U.S.A.">
        <title>Characterizing a model human gut microbiota composed of members of its two dominant bacterial phyla.</title>
        <authorList>
            <person name="Mahowald M.A."/>
            <person name="Rey F.E."/>
            <person name="Seedorf H."/>
            <person name="Turnbaugh P.J."/>
            <person name="Fulton R.S."/>
            <person name="Wollam A."/>
            <person name="Shah N."/>
            <person name="Wang C."/>
            <person name="Magrini V."/>
            <person name="Wilson R.K."/>
            <person name="Cantarel B.L."/>
            <person name="Coutinho P.M."/>
            <person name="Henrissat B."/>
            <person name="Crock L.W."/>
            <person name="Russell A."/>
            <person name="Verberkmoes N.C."/>
            <person name="Hettich R.L."/>
            <person name="Gordon J.I."/>
        </authorList>
    </citation>
    <scope>NUCLEOTIDE SEQUENCE [LARGE SCALE GENOMIC DNA]</scope>
    <source>
        <strain>ATCC 27750 / DSM 3376 / VPI C15-48 / C15-B4</strain>
    </source>
</reference>
<name>GLGA_LACE2</name>
<gene>
    <name evidence="1" type="primary">glgA</name>
    <name type="ordered locus">EUBELI_01075</name>
</gene>
<dbReference type="EC" id="2.4.1.21" evidence="1"/>
<dbReference type="EMBL" id="CP001104">
    <property type="protein sequence ID" value="ACR72075.1"/>
    <property type="molecule type" value="Genomic_DNA"/>
</dbReference>
<dbReference type="RefSeq" id="WP_012739310.1">
    <property type="nucleotide sequence ID" value="NC_012778.1"/>
</dbReference>
<dbReference type="SMR" id="C4Z0G2"/>
<dbReference type="STRING" id="515620.EUBELI_01075"/>
<dbReference type="CAZy" id="GT5">
    <property type="family name" value="Glycosyltransferase Family 5"/>
</dbReference>
<dbReference type="GeneID" id="41355802"/>
<dbReference type="KEGG" id="eel:EUBELI_01075"/>
<dbReference type="eggNOG" id="COG0297">
    <property type="taxonomic scope" value="Bacteria"/>
</dbReference>
<dbReference type="HOGENOM" id="CLU_009583_18_2_9"/>
<dbReference type="UniPathway" id="UPA00164"/>
<dbReference type="Proteomes" id="UP000001476">
    <property type="component" value="Chromosome"/>
</dbReference>
<dbReference type="GO" id="GO:0009011">
    <property type="term" value="F:alpha-1,4-glucan glucosyltransferase (ADP-glucose donor) activity"/>
    <property type="evidence" value="ECO:0007669"/>
    <property type="project" value="UniProtKB-UniRule"/>
</dbReference>
<dbReference type="GO" id="GO:0004373">
    <property type="term" value="F:alpha-1,4-glucan glucosyltransferase (UDP-glucose donor) activity"/>
    <property type="evidence" value="ECO:0007669"/>
    <property type="project" value="InterPro"/>
</dbReference>
<dbReference type="GO" id="GO:0005978">
    <property type="term" value="P:glycogen biosynthetic process"/>
    <property type="evidence" value="ECO:0007669"/>
    <property type="project" value="UniProtKB-UniRule"/>
</dbReference>
<dbReference type="CDD" id="cd03791">
    <property type="entry name" value="GT5_Glycogen_synthase_DULL1-like"/>
    <property type="match status" value="1"/>
</dbReference>
<dbReference type="Gene3D" id="3.40.50.2000">
    <property type="entry name" value="Glycogen Phosphorylase B"/>
    <property type="match status" value="2"/>
</dbReference>
<dbReference type="HAMAP" id="MF_00484">
    <property type="entry name" value="Glycogen_synth"/>
    <property type="match status" value="1"/>
</dbReference>
<dbReference type="InterPro" id="IPR001296">
    <property type="entry name" value="Glyco_trans_1"/>
</dbReference>
<dbReference type="InterPro" id="IPR011835">
    <property type="entry name" value="GS/SS"/>
</dbReference>
<dbReference type="InterPro" id="IPR013534">
    <property type="entry name" value="Starch_synth_cat_dom"/>
</dbReference>
<dbReference type="NCBIfam" id="TIGR02095">
    <property type="entry name" value="glgA"/>
    <property type="match status" value="1"/>
</dbReference>
<dbReference type="NCBIfam" id="NF001898">
    <property type="entry name" value="PRK00654.1-1"/>
    <property type="match status" value="1"/>
</dbReference>
<dbReference type="PANTHER" id="PTHR45825:SF11">
    <property type="entry name" value="ALPHA AMYLASE DOMAIN-CONTAINING PROTEIN"/>
    <property type="match status" value="1"/>
</dbReference>
<dbReference type="PANTHER" id="PTHR45825">
    <property type="entry name" value="GRANULE-BOUND STARCH SYNTHASE 1, CHLOROPLASTIC/AMYLOPLASTIC"/>
    <property type="match status" value="1"/>
</dbReference>
<dbReference type="Pfam" id="PF08323">
    <property type="entry name" value="Glyco_transf_5"/>
    <property type="match status" value="1"/>
</dbReference>
<dbReference type="Pfam" id="PF00534">
    <property type="entry name" value="Glycos_transf_1"/>
    <property type="match status" value="1"/>
</dbReference>
<dbReference type="SUPFAM" id="SSF53756">
    <property type="entry name" value="UDP-Glycosyltransferase/glycogen phosphorylase"/>
    <property type="match status" value="1"/>
</dbReference>